<feature type="chain" id="PRO_0000143078" description="Induced myeloid leukemia cell differentiation protein Mcl-1 homolog">
    <location>
        <begin position="1"/>
        <end position="350"/>
    </location>
</feature>
<feature type="transmembrane region" description="Helical" evidence="5">
    <location>
        <begin position="327"/>
        <end position="349"/>
    </location>
</feature>
<feature type="region of interest" description="Disordered" evidence="6">
    <location>
        <begin position="23"/>
        <end position="95"/>
    </location>
</feature>
<feature type="region of interest" description="PEST-like" evidence="1">
    <location>
        <begin position="104"/>
        <end position="175"/>
    </location>
</feature>
<feature type="region of interest" description="Disordered" evidence="6">
    <location>
        <begin position="150"/>
        <end position="169"/>
    </location>
</feature>
<feature type="short sequence motif" description="BH3">
    <location>
        <begin position="209"/>
        <end position="223"/>
    </location>
</feature>
<feature type="short sequence motif" description="BH1">
    <location>
        <begin position="252"/>
        <end position="272"/>
    </location>
</feature>
<feature type="short sequence motif" description="BH2">
    <location>
        <begin position="304"/>
        <end position="319"/>
    </location>
</feature>
<feature type="compositionally biased region" description="Low complexity" evidence="6">
    <location>
        <begin position="31"/>
        <end position="41"/>
    </location>
</feature>
<feature type="compositionally biased region" description="Gly residues" evidence="6">
    <location>
        <begin position="50"/>
        <end position="61"/>
    </location>
</feature>
<feature type="site" description="Cleavage; by caspase-3" evidence="1">
    <location>
        <begin position="127"/>
        <end position="128"/>
    </location>
</feature>
<feature type="site" description="Cleavage; by caspase-3" evidence="1">
    <location>
        <begin position="157"/>
        <end position="158"/>
    </location>
</feature>
<feature type="modified residue" description="Phosphoserine" evidence="3">
    <location>
        <position position="121"/>
    </location>
</feature>
<feature type="modified residue" description="Phosphoserine; by GSK3-alpha and GSK3-beta" evidence="3">
    <location>
        <position position="159"/>
    </location>
</feature>
<feature type="modified residue" description="Phosphoserine" evidence="3">
    <location>
        <position position="162"/>
    </location>
</feature>
<feature type="modified residue" description="Phosphothreonine" evidence="3">
    <location>
        <position position="163"/>
    </location>
</feature>
<feature type="cross-link" description="Glycyl lysine isopeptide (Lys-Gly) (interchain with G-Cter in ubiquitin)" evidence="3">
    <location>
        <position position="5"/>
    </location>
</feature>
<feature type="cross-link" description="Glycyl lysine isopeptide (Lys-Gly) (interchain with G-Cter in ubiquitin)" evidence="3">
    <location>
        <position position="136"/>
    </location>
</feature>
<feature type="cross-link" description="Glycyl lysine isopeptide (Lys-Gly) (interchain with G-Cter in ubiquitin)" evidence="3">
    <location>
        <position position="194"/>
    </location>
</feature>
<feature type="cross-link" description="Glycyl lysine isopeptide (Lys-Gly) (interchain with G-Cter in ubiquitin)" evidence="3">
    <location>
        <position position="197"/>
    </location>
</feature>
<gene>
    <name type="primary">MCL1</name>
</gene>
<proteinExistence type="evidence at transcript level"/>
<sequence>MFGLKRNAVIRTQLYCGGAGLGAGSGGASSSGGRLLASGREATTRREGGGGEAGAVIGGSAGASPPTTLAPDARRVARPSPIGAEGPNVSATPPRLLLLAPPCRASPPEEMEGPAADAIMSPEEELDGYEPEPLGKRPAVLPLLELVGEASSGPGMDGSLPSTPPPAEEEEDELYRQSLEIISRYLREQATGAKDAKPLGGSRAASRKALETLQRVGDGVQRNHETAFQGMLRKLDIKNEDDVKSLSRVIVHVFSDGVTNWGRIVTLISFGAFVAKHLKSINQESCIEPLAESITDVLVRTKRDWLVKQRGWDGFVEFFHVEDLEGGIRNVLLAFAGVAGVGAGLAYLIR</sequence>
<accession>Q8HYS5</accession>
<organism>
    <name type="scientific">Canis lupus familiaris</name>
    <name type="common">Dog</name>
    <name type="synonym">Canis familiaris</name>
    <dbReference type="NCBI Taxonomy" id="9615"/>
    <lineage>
        <taxon>Eukaryota</taxon>
        <taxon>Metazoa</taxon>
        <taxon>Chordata</taxon>
        <taxon>Craniata</taxon>
        <taxon>Vertebrata</taxon>
        <taxon>Euteleostomi</taxon>
        <taxon>Mammalia</taxon>
        <taxon>Eutheria</taxon>
        <taxon>Laurasiatheria</taxon>
        <taxon>Carnivora</taxon>
        <taxon>Caniformia</taxon>
        <taxon>Canidae</taxon>
        <taxon>Canis</taxon>
    </lineage>
</organism>
<evidence type="ECO:0000250" key="1"/>
<evidence type="ECO:0000250" key="2">
    <source>
        <dbReference type="UniProtKB" id="P97287"/>
    </source>
</evidence>
<evidence type="ECO:0000250" key="3">
    <source>
        <dbReference type="UniProtKB" id="Q07820"/>
    </source>
</evidence>
<evidence type="ECO:0000250" key="4">
    <source>
        <dbReference type="UniProtKB" id="Q9Z1P3"/>
    </source>
</evidence>
<evidence type="ECO:0000255" key="5"/>
<evidence type="ECO:0000256" key="6">
    <source>
        <dbReference type="SAM" id="MobiDB-lite"/>
    </source>
</evidence>
<evidence type="ECO:0000269" key="7">
    <source>
    </source>
</evidence>
<evidence type="ECO:0000305" key="8"/>
<dbReference type="EMBL" id="AB093582">
    <property type="protein sequence ID" value="BAC21258.1"/>
    <property type="molecule type" value="mRNA"/>
</dbReference>
<dbReference type="SMR" id="Q8HYS5"/>
<dbReference type="FunCoup" id="Q8HYS5">
    <property type="interactions" value="227"/>
</dbReference>
<dbReference type="STRING" id="9615.ENSCAFP00000017738"/>
<dbReference type="PaxDb" id="9612-ENSCAFP00000043103"/>
<dbReference type="eggNOG" id="KOG4728">
    <property type="taxonomic scope" value="Eukaryota"/>
</dbReference>
<dbReference type="InParanoid" id="Q8HYS5"/>
<dbReference type="OrthoDB" id="8932147at2759"/>
<dbReference type="Proteomes" id="UP000002254">
    <property type="component" value="Unplaced"/>
</dbReference>
<dbReference type="Proteomes" id="UP000694429">
    <property type="component" value="Unplaced"/>
</dbReference>
<dbReference type="Proteomes" id="UP000694542">
    <property type="component" value="Unplaced"/>
</dbReference>
<dbReference type="Proteomes" id="UP000805418">
    <property type="component" value="Unplaced"/>
</dbReference>
<dbReference type="GO" id="GO:0005829">
    <property type="term" value="C:cytosol"/>
    <property type="evidence" value="ECO:0000250"/>
    <property type="project" value="UniProtKB"/>
</dbReference>
<dbReference type="GO" id="GO:0016020">
    <property type="term" value="C:membrane"/>
    <property type="evidence" value="ECO:0000250"/>
    <property type="project" value="UniProtKB"/>
</dbReference>
<dbReference type="GO" id="GO:0005741">
    <property type="term" value="C:mitochondrial outer membrane"/>
    <property type="evidence" value="ECO:0000318"/>
    <property type="project" value="GO_Central"/>
</dbReference>
<dbReference type="GO" id="GO:0005654">
    <property type="term" value="C:nucleoplasm"/>
    <property type="evidence" value="ECO:0007669"/>
    <property type="project" value="UniProtKB-SubCell"/>
</dbReference>
<dbReference type="GO" id="GO:0015267">
    <property type="term" value="F:channel activity"/>
    <property type="evidence" value="ECO:0000318"/>
    <property type="project" value="GO_Central"/>
</dbReference>
<dbReference type="GO" id="GO:0046982">
    <property type="term" value="F:protein heterodimerization activity"/>
    <property type="evidence" value="ECO:0000250"/>
    <property type="project" value="UniProtKB"/>
</dbReference>
<dbReference type="GO" id="GO:0030154">
    <property type="term" value="P:cell differentiation"/>
    <property type="evidence" value="ECO:0007669"/>
    <property type="project" value="UniProtKB-KW"/>
</dbReference>
<dbReference type="GO" id="GO:0097192">
    <property type="term" value="P:extrinsic apoptotic signaling pathway in absence of ligand"/>
    <property type="evidence" value="ECO:0000250"/>
    <property type="project" value="UniProtKB"/>
</dbReference>
<dbReference type="GO" id="GO:0008630">
    <property type="term" value="P:intrinsic apoptotic signaling pathway in response to DNA damage"/>
    <property type="evidence" value="ECO:0000318"/>
    <property type="project" value="GO_Central"/>
</dbReference>
<dbReference type="GO" id="GO:0008053">
    <property type="term" value="P:mitochondrial fusion"/>
    <property type="evidence" value="ECO:0000318"/>
    <property type="project" value="GO_Central"/>
</dbReference>
<dbReference type="GO" id="GO:0043525">
    <property type="term" value="P:positive regulation of neuron apoptotic process"/>
    <property type="evidence" value="ECO:0000318"/>
    <property type="project" value="GO_Central"/>
</dbReference>
<dbReference type="GO" id="GO:0001836">
    <property type="term" value="P:release of cytochrome c from mitochondria"/>
    <property type="evidence" value="ECO:0000318"/>
    <property type="project" value="GO_Central"/>
</dbReference>
<dbReference type="CDD" id="cd06845">
    <property type="entry name" value="Bcl-2_like"/>
    <property type="match status" value="1"/>
</dbReference>
<dbReference type="FunFam" id="1.10.437.10:FF:000002">
    <property type="entry name" value="Induced myeloid leukemia cell differentiation protein Mcl-1"/>
    <property type="match status" value="1"/>
</dbReference>
<dbReference type="Gene3D" id="1.10.437.10">
    <property type="entry name" value="Blc2-like"/>
    <property type="match status" value="1"/>
</dbReference>
<dbReference type="InterPro" id="IPR013281">
    <property type="entry name" value="Apop_reg_Mc1"/>
</dbReference>
<dbReference type="InterPro" id="IPR036834">
    <property type="entry name" value="Bcl-2-like_sf"/>
</dbReference>
<dbReference type="InterPro" id="IPR046371">
    <property type="entry name" value="Bcl-2_BH1-3"/>
</dbReference>
<dbReference type="InterPro" id="IPR026298">
    <property type="entry name" value="Bcl-2_fam"/>
</dbReference>
<dbReference type="InterPro" id="IPR002475">
    <property type="entry name" value="Bcl2-like"/>
</dbReference>
<dbReference type="InterPro" id="IPR020717">
    <property type="entry name" value="Bcl2_BH1_motif_CS"/>
</dbReference>
<dbReference type="InterPro" id="IPR020726">
    <property type="entry name" value="Bcl2_BH2_motif_CS"/>
</dbReference>
<dbReference type="InterPro" id="IPR020728">
    <property type="entry name" value="Bcl2_BH3_motif_CS"/>
</dbReference>
<dbReference type="PANTHER" id="PTHR11256">
    <property type="entry name" value="BCL-2 RELATED"/>
    <property type="match status" value="1"/>
</dbReference>
<dbReference type="PANTHER" id="PTHR11256:SF46">
    <property type="entry name" value="INDUCED MYELOID LEUKEMIA CELL DIFFERENTIATION PROTEIN MCL-1"/>
    <property type="match status" value="1"/>
</dbReference>
<dbReference type="Pfam" id="PF00452">
    <property type="entry name" value="Bcl-2"/>
    <property type="match status" value="1"/>
</dbReference>
<dbReference type="PRINTS" id="PR01866">
    <property type="entry name" value="APOPREGMCL1"/>
</dbReference>
<dbReference type="PRINTS" id="PR01862">
    <property type="entry name" value="BCL2FAMILY"/>
</dbReference>
<dbReference type="SMART" id="SM00337">
    <property type="entry name" value="BCL"/>
    <property type="match status" value="1"/>
</dbReference>
<dbReference type="SUPFAM" id="SSF56854">
    <property type="entry name" value="Bcl-2 inhibitors of programmed cell death"/>
    <property type="match status" value="1"/>
</dbReference>
<dbReference type="PROSITE" id="PS50062">
    <property type="entry name" value="BCL2_FAMILY"/>
    <property type="match status" value="1"/>
</dbReference>
<dbReference type="PROSITE" id="PS01080">
    <property type="entry name" value="BH1"/>
    <property type="match status" value="1"/>
</dbReference>
<dbReference type="PROSITE" id="PS01258">
    <property type="entry name" value="BH2"/>
    <property type="match status" value="1"/>
</dbReference>
<dbReference type="PROSITE" id="PS01259">
    <property type="entry name" value="BH3"/>
    <property type="match status" value="1"/>
</dbReference>
<protein>
    <recommendedName>
        <fullName>Induced myeloid leukemia cell differentiation protein Mcl-1 homolog</fullName>
    </recommendedName>
</protein>
<keyword id="KW-0053">Apoptosis</keyword>
<keyword id="KW-0963">Cytoplasm</keyword>
<keyword id="KW-0217">Developmental protein</keyword>
<keyword id="KW-0221">Differentiation</keyword>
<keyword id="KW-1017">Isopeptide bond</keyword>
<keyword id="KW-0472">Membrane</keyword>
<keyword id="KW-0496">Mitochondrion</keyword>
<keyword id="KW-0539">Nucleus</keyword>
<keyword id="KW-0597">Phosphoprotein</keyword>
<keyword id="KW-1185">Reference proteome</keyword>
<keyword id="KW-0812">Transmembrane</keyword>
<keyword id="KW-1133">Transmembrane helix</keyword>
<keyword id="KW-0832">Ubl conjugation</keyword>
<reference key="1">
    <citation type="journal article" date="2004" name="J. Vet. Med. Sci.">
        <title>Molecular cloning of canine Mcl-1 gene and its expression in tumor cell lines.</title>
        <authorList>
            <person name="Sano J."/>
            <person name="Oguma K."/>
            <person name="Kano R."/>
            <person name="Hasegawa A."/>
        </authorList>
    </citation>
    <scope>NUCLEOTIDE SEQUENCE [MRNA]</scope>
    <scope>TISSUE SPECIFICITY</scope>
    <source>
        <tissue>Blood</tissue>
    </source>
</reference>
<name>MCL1_CANLF</name>
<comment type="function">
    <text evidence="1">Involved in the regulation of apoptosis versus cell survival, and in the maintenance of viability but not of proliferation. Mediates its effects by interactions with a number of other regulators of apoptosis (By similarity).</text>
</comment>
<comment type="subunit">
    <text evidence="2 3 4">Interacts with HIF3A (via C-terminus domain) (By similarity). Interacts with BOK, BIK, BAX, BAK1, and TPT1. Interacts with unphosphorylated BAD (By similarity). Interacts with BMF, BBC3 and PMAIP1 (By similarity). Interacts with BOP (By similarity). Interacts with BCL2L11; may sequester BCL2L11 to prevent its pro-apoptotic activity (By similarity). Interacts with GIMAP5 and HSPA8/HSC70; the interaction between HSPA8 and MCL1 is impaired in the absence of GIMAP5 (By similarity).</text>
</comment>
<comment type="subcellular location">
    <subcellularLocation>
        <location evidence="1">Membrane</location>
        <topology evidence="1">Single-pass membrane protein</topology>
    </subcellularLocation>
    <subcellularLocation>
        <location evidence="1">Cytoplasm</location>
    </subcellularLocation>
    <subcellularLocation>
        <location evidence="1">Mitochondrion</location>
    </subcellularLocation>
    <subcellularLocation>
        <location evidence="1">Nucleus</location>
        <location evidence="1">Nucleoplasm</location>
    </subcellularLocation>
    <text>Cytoplasmic, associated with mitochondria.</text>
</comment>
<comment type="tissue specificity">
    <text evidence="7">Detected in peripheral blood mononuclear cells and bone marrow.</text>
</comment>
<comment type="PTM">
    <text evidence="1">Cleaved by CASP3 during apoptosis, yielding a pro-apoptotic C-terminal fragment.</text>
</comment>
<comment type="PTM">
    <text evidence="1">Rapidly degraded in the absence of phosphorylation in the PEST region.</text>
</comment>
<comment type="PTM">
    <text evidence="1">Phosphorylated on Ser-159, by GSK3, in response to IL3/interleukin-3 withdrawal. Phosphorylation at Ser-159 induces ubiquitination and proteasomal degradation, abrogating the anti-apoptotic activity. Treatment with taxol or okadaic acid induces phosphorylation on additional sites (By similarity).</text>
</comment>
<comment type="PTM">
    <text evidence="3">Ubiquitinated. Ubiquitination is induced by phosphorylation at Ser-159 (By similarity). Deubiquitinated by USP20; leading to increased stability.</text>
</comment>
<comment type="similarity">
    <text evidence="8">Belongs to the Bcl-2 family.</text>
</comment>